<feature type="chain" id="PRO_0000459981" description="Acyl carrier protein TtuC">
    <location>
        <begin position="1"/>
        <end position="87"/>
    </location>
</feature>
<feature type="domain" description="Carrier" evidence="1">
    <location>
        <begin position="11"/>
        <end position="87"/>
    </location>
</feature>
<feature type="modified residue" description="O-(pantetheine 4'-phosphoryl)serine" evidence="1">
    <location>
        <position position="48"/>
    </location>
</feature>
<gene>
    <name evidence="3" type="primary">ttuC</name>
    <name evidence="5" type="ordered locus">TERTU_2255</name>
</gene>
<reference key="1">
    <citation type="journal article" date="2009" name="PLoS ONE">
        <title>The complete genome of Teredinibacter turnerae T7901: an intracellular endosymbiont of marine wood-boring bivalves (shipworms).</title>
        <authorList>
            <person name="Yang J.C."/>
            <person name="Madupu R."/>
            <person name="Durkin A.S."/>
            <person name="Ekborg N.A."/>
            <person name="Pedamallu C.S."/>
            <person name="Hostetler J.B."/>
            <person name="Radune D."/>
            <person name="Toms B.S."/>
            <person name="Henrissat B."/>
            <person name="Coutinho P.M."/>
            <person name="Schwarz S."/>
            <person name="Field L."/>
            <person name="Trindade-Silva A.E."/>
            <person name="Soares C.A.G."/>
            <person name="Elshahawi S."/>
            <person name="Hanora A."/>
            <person name="Schmidt E.W."/>
            <person name="Haygood M.G."/>
            <person name="Posfai J."/>
            <person name="Benner J."/>
            <person name="Madinger C."/>
            <person name="Nove J."/>
            <person name="Anton B."/>
            <person name="Chaudhary K."/>
            <person name="Foster J."/>
            <person name="Holman A."/>
            <person name="Kumar S."/>
            <person name="Lessard P.A."/>
            <person name="Luyten Y.A."/>
            <person name="Slatko B."/>
            <person name="Wood N."/>
            <person name="Wu B."/>
            <person name="Teplitski M."/>
            <person name="Mougous J.D."/>
            <person name="Ward N."/>
            <person name="Eisen J.A."/>
            <person name="Badger J.H."/>
            <person name="Distel D.L."/>
        </authorList>
    </citation>
    <scope>NUCLEOTIDE SEQUENCE [LARGE SCALE GENOMIC DNA]</scope>
    <source>
        <strain>ATCC 39867 / T7901</strain>
    </source>
</reference>
<reference key="2">
    <citation type="journal article" date="2015" name="ACS Chem. Biol.">
        <title>Bacterial genome mining of enzymatic tools for alkyne biosynthesis.</title>
        <authorList>
            <person name="Zhu X."/>
            <person name="Su M."/>
            <person name="Manickam K."/>
            <person name="Zhang W."/>
        </authorList>
    </citation>
    <scope>FUNCTION</scope>
    <source>
        <strain>ATCC 39867 / T7901</strain>
    </source>
</reference>
<sequence>MTTVETLEPTITAEDVQQWLAEYIADVLEISESAIDFDTPFHQFGLDSSAVVGLVADLSEWSGVAIGIKSIRKNNSIHALSQFIAAK</sequence>
<protein>
    <recommendedName>
        <fullName evidence="4">Acyl carrier protein TtuC</fullName>
    </recommendedName>
</protein>
<proteinExistence type="inferred from homology"/>
<accession>C5BK12</accession>
<evidence type="ECO:0000255" key="1">
    <source>
        <dbReference type="PROSITE-ProRule" id="PRU00258"/>
    </source>
</evidence>
<evidence type="ECO:0000269" key="2">
    <source>
    </source>
</evidence>
<evidence type="ECO:0000303" key="3">
    <source>
    </source>
</evidence>
<evidence type="ECO:0000305" key="4"/>
<evidence type="ECO:0000312" key="5">
    <source>
        <dbReference type="EMBL" id="ACR12812.1"/>
    </source>
</evidence>
<comment type="function">
    <text evidence="2">Carrier protein likely involved in the biosynthesis of a polyyne metabolite (PubMed:26441143). Accepts as substrate the activated form of decanoic acid from TtuA (PubMed:26441143).</text>
</comment>
<comment type="cofactor">
    <cofactor evidence="1">
        <name>pantetheine 4'-phosphate</name>
        <dbReference type="ChEBI" id="CHEBI:47942"/>
    </cofactor>
</comment>
<organism>
    <name type="scientific">Teredinibacter turnerae (strain ATCC 39867 / T7901)</name>
    <dbReference type="NCBI Taxonomy" id="377629"/>
    <lineage>
        <taxon>Bacteria</taxon>
        <taxon>Pseudomonadati</taxon>
        <taxon>Pseudomonadota</taxon>
        <taxon>Gammaproteobacteria</taxon>
        <taxon>Cellvibrionales</taxon>
        <taxon>Cellvibrionaceae</taxon>
        <taxon>Teredinibacter</taxon>
    </lineage>
</organism>
<name>TTUC_TERTT</name>
<dbReference type="EMBL" id="CP001614">
    <property type="protein sequence ID" value="ACR12812.1"/>
    <property type="molecule type" value="Genomic_DNA"/>
</dbReference>
<dbReference type="RefSeq" id="WP_015818925.1">
    <property type="nucleotide sequence ID" value="NC_012997.1"/>
</dbReference>
<dbReference type="SMR" id="C5BK12"/>
<dbReference type="STRING" id="377629.TERTU_2255"/>
<dbReference type="GeneID" id="58409813"/>
<dbReference type="KEGG" id="ttu:TERTU_2255"/>
<dbReference type="eggNOG" id="COG3433">
    <property type="taxonomic scope" value="Bacteria"/>
</dbReference>
<dbReference type="HOGENOM" id="CLU_157807_2_1_6"/>
<dbReference type="OrthoDB" id="425617at2"/>
<dbReference type="Proteomes" id="UP000009080">
    <property type="component" value="Chromosome"/>
</dbReference>
<dbReference type="GO" id="GO:0006631">
    <property type="term" value="P:fatty acid metabolic process"/>
    <property type="evidence" value="ECO:0007669"/>
    <property type="project" value="UniProtKB-KW"/>
</dbReference>
<dbReference type="Gene3D" id="1.10.1200.10">
    <property type="entry name" value="ACP-like"/>
    <property type="match status" value="1"/>
</dbReference>
<dbReference type="InterPro" id="IPR036736">
    <property type="entry name" value="ACP-like_sf"/>
</dbReference>
<dbReference type="InterPro" id="IPR009081">
    <property type="entry name" value="PP-bd_ACP"/>
</dbReference>
<dbReference type="InterPro" id="IPR006162">
    <property type="entry name" value="Ppantetheine_attach_site"/>
</dbReference>
<dbReference type="Pfam" id="PF00550">
    <property type="entry name" value="PP-binding"/>
    <property type="match status" value="1"/>
</dbReference>
<dbReference type="SUPFAM" id="SSF47336">
    <property type="entry name" value="ACP-like"/>
    <property type="match status" value="1"/>
</dbReference>
<dbReference type="PROSITE" id="PS50075">
    <property type="entry name" value="CARRIER"/>
    <property type="match status" value="1"/>
</dbReference>
<dbReference type="PROSITE" id="PS00012">
    <property type="entry name" value="PHOSPHOPANTETHEINE"/>
    <property type="match status" value="1"/>
</dbReference>
<keyword id="KW-0276">Fatty acid metabolism</keyword>
<keyword id="KW-0443">Lipid metabolism</keyword>
<keyword id="KW-0596">Phosphopantetheine</keyword>
<keyword id="KW-0597">Phosphoprotein</keyword>
<keyword id="KW-1185">Reference proteome</keyword>